<keyword id="KW-0067">ATP-binding</keyword>
<keyword id="KW-0966">Cell projection</keyword>
<keyword id="KW-0969">Cilium</keyword>
<keyword id="KW-0175">Coiled coil</keyword>
<keyword id="KW-0963">Cytoplasm</keyword>
<keyword id="KW-0206">Cytoskeleton</keyword>
<keyword id="KW-0282">Flagellum</keyword>
<keyword id="KW-0493">Microtubule</keyword>
<keyword id="KW-0505">Motor protein</keyword>
<keyword id="KW-0547">Nucleotide-binding</keyword>
<keyword id="KW-0597">Phosphoprotein</keyword>
<keyword id="KW-1185">Reference proteome</keyword>
<name>KIF9_MOUSE</name>
<comment type="function">
    <text evidence="5">Essential for normal male fertility and for progressive motility of spermatozoa.</text>
</comment>
<comment type="subunit">
    <text evidence="5">Interacts with HYDIN.</text>
</comment>
<comment type="subcellular location">
    <subcellularLocation>
        <location evidence="6">Cytoplasm</location>
        <location evidence="6">Cytoskeleton</location>
    </subcellularLocation>
    <subcellularLocation>
        <location evidence="5">Cell projection</location>
        <location evidence="5">Cilium</location>
        <location evidence="5">Flagellum</location>
    </subcellularLocation>
    <subcellularLocation>
        <location evidence="7">Cytoplasm</location>
        <location evidence="7">Cytoskeleton</location>
        <location evidence="7">Flagellum axoneme</location>
    </subcellularLocation>
</comment>
<comment type="tissue specificity">
    <text evidence="5">Highly expressed in the testis (at protein level) (PubMed:32072696). Weakly expressed in the brain, thymus, lung and heart (PubMed:32072696).</text>
</comment>
<comment type="disruption phenotype">
    <text evidence="5">Mice exhibit impaired sperm motility and male subfertility and flagella show an asymmetric waveform pattern, which leads to a circular motion of spermatozoa.</text>
</comment>
<comment type="similarity">
    <text evidence="3">Belongs to the TRAFAC class myosin-kinesin ATPase superfamily. Kinesin family.</text>
</comment>
<dbReference type="EMBL" id="AJ132889">
    <property type="protein sequence ID" value="CAB46016.1"/>
    <property type="molecule type" value="mRNA"/>
</dbReference>
<dbReference type="EMBL" id="AC132103">
    <property type="status" value="NOT_ANNOTATED_CDS"/>
    <property type="molecule type" value="Genomic_DNA"/>
</dbReference>
<dbReference type="EMBL" id="AB001437">
    <property type="protein sequence ID" value="BAA22397.1"/>
    <property type="molecule type" value="mRNA"/>
</dbReference>
<dbReference type="CCDS" id="CCDS23568.1"/>
<dbReference type="RefSeq" id="NP_001398107.1">
    <property type="nucleotide sequence ID" value="NM_001411178.1"/>
</dbReference>
<dbReference type="RefSeq" id="NP_034758.2">
    <property type="nucleotide sequence ID" value="NM_010628.4"/>
</dbReference>
<dbReference type="SMR" id="Q9WV04"/>
<dbReference type="BioGRID" id="200950">
    <property type="interactions" value="3"/>
</dbReference>
<dbReference type="FunCoup" id="Q9WV04">
    <property type="interactions" value="212"/>
</dbReference>
<dbReference type="IntAct" id="Q9WV04">
    <property type="interactions" value="1"/>
</dbReference>
<dbReference type="STRING" id="10090.ENSMUSP00000057896"/>
<dbReference type="iPTMnet" id="Q9WV04"/>
<dbReference type="PhosphoSitePlus" id="Q9WV04"/>
<dbReference type="PaxDb" id="10090-ENSMUSP00000057896"/>
<dbReference type="ProteomicsDB" id="269307"/>
<dbReference type="Antibodypedia" id="12887">
    <property type="antibodies" value="120 antibodies from 20 providers"/>
</dbReference>
<dbReference type="DNASU" id="16578"/>
<dbReference type="Ensembl" id="ENSMUST00000084952.8">
    <property type="protein sequence ID" value="ENSMUSP00000082016.6"/>
    <property type="gene ID" value="ENSMUSG00000032489.18"/>
</dbReference>
<dbReference type="GeneID" id="16578"/>
<dbReference type="KEGG" id="mmu:16578"/>
<dbReference type="UCSC" id="uc009rud.2">
    <property type="organism name" value="mouse"/>
</dbReference>
<dbReference type="AGR" id="MGI:1098237"/>
<dbReference type="CTD" id="64147"/>
<dbReference type="MGI" id="MGI:1098237">
    <property type="gene designation" value="Kif9"/>
</dbReference>
<dbReference type="VEuPathDB" id="HostDB:ENSMUSG00000032489"/>
<dbReference type="eggNOG" id="KOG4280">
    <property type="taxonomic scope" value="Eukaryota"/>
</dbReference>
<dbReference type="GeneTree" id="ENSGT00940000158533"/>
<dbReference type="InParanoid" id="Q9WV04"/>
<dbReference type="OrthoDB" id="3176171at2759"/>
<dbReference type="Reactome" id="R-MMU-2132295">
    <property type="pathway name" value="MHC class II antigen presentation"/>
</dbReference>
<dbReference type="Reactome" id="R-MMU-6811434">
    <property type="pathway name" value="COPI-dependent Golgi-to-ER retrograde traffic"/>
</dbReference>
<dbReference type="Reactome" id="R-MMU-983189">
    <property type="pathway name" value="Kinesins"/>
</dbReference>
<dbReference type="BioGRID-ORCS" id="16578">
    <property type="hits" value="1 hit in 78 CRISPR screens"/>
</dbReference>
<dbReference type="PRO" id="PR:Q9WV04"/>
<dbReference type="Proteomes" id="UP000000589">
    <property type="component" value="Chromosome 9"/>
</dbReference>
<dbReference type="RNAct" id="Q9WV04">
    <property type="molecule type" value="protein"/>
</dbReference>
<dbReference type="Bgee" id="ENSMUSG00000032489">
    <property type="expression patterns" value="Expressed in spermatid and 91 other cell types or tissues"/>
</dbReference>
<dbReference type="ExpressionAtlas" id="Q9WV04">
    <property type="expression patterns" value="baseline and differential"/>
</dbReference>
<dbReference type="GO" id="GO:0005829">
    <property type="term" value="C:cytosol"/>
    <property type="evidence" value="ECO:0000304"/>
    <property type="project" value="Reactome"/>
</dbReference>
<dbReference type="GO" id="GO:0005874">
    <property type="term" value="C:microtubule"/>
    <property type="evidence" value="ECO:0007669"/>
    <property type="project" value="UniProtKB-KW"/>
</dbReference>
<dbReference type="GO" id="GO:0002102">
    <property type="term" value="C:podosome"/>
    <property type="evidence" value="ECO:0007669"/>
    <property type="project" value="Ensembl"/>
</dbReference>
<dbReference type="GO" id="GO:0036126">
    <property type="term" value="C:sperm flagellum"/>
    <property type="evidence" value="ECO:0000314"/>
    <property type="project" value="UniProtKB"/>
</dbReference>
<dbReference type="GO" id="GO:0031982">
    <property type="term" value="C:vesicle"/>
    <property type="evidence" value="ECO:0007669"/>
    <property type="project" value="Ensembl"/>
</dbReference>
<dbReference type="GO" id="GO:0005524">
    <property type="term" value="F:ATP binding"/>
    <property type="evidence" value="ECO:0007669"/>
    <property type="project" value="UniProtKB-KW"/>
</dbReference>
<dbReference type="GO" id="GO:0042802">
    <property type="term" value="F:identical protein binding"/>
    <property type="evidence" value="ECO:0007669"/>
    <property type="project" value="Ensembl"/>
</dbReference>
<dbReference type="GO" id="GO:0008017">
    <property type="term" value="F:microtubule binding"/>
    <property type="evidence" value="ECO:0007669"/>
    <property type="project" value="InterPro"/>
</dbReference>
<dbReference type="GO" id="GO:0003777">
    <property type="term" value="F:microtubule motor activity"/>
    <property type="evidence" value="ECO:0007669"/>
    <property type="project" value="InterPro"/>
</dbReference>
<dbReference type="GO" id="GO:0022617">
    <property type="term" value="P:extracellular matrix disassembly"/>
    <property type="evidence" value="ECO:0007669"/>
    <property type="project" value="Ensembl"/>
</dbReference>
<dbReference type="GO" id="GO:0007018">
    <property type="term" value="P:microtubule-based movement"/>
    <property type="evidence" value="ECO:0007669"/>
    <property type="project" value="InterPro"/>
</dbReference>
<dbReference type="GO" id="GO:1903008">
    <property type="term" value="P:organelle disassembly"/>
    <property type="evidence" value="ECO:0007669"/>
    <property type="project" value="Ensembl"/>
</dbReference>
<dbReference type="GO" id="GO:1901317">
    <property type="term" value="P:regulation of flagellated sperm motility"/>
    <property type="evidence" value="ECO:0000315"/>
    <property type="project" value="UniProtKB"/>
</dbReference>
<dbReference type="GO" id="GO:0071801">
    <property type="term" value="P:regulation of podosome assembly"/>
    <property type="evidence" value="ECO:0007669"/>
    <property type="project" value="Ensembl"/>
</dbReference>
<dbReference type="CDD" id="cd01375">
    <property type="entry name" value="KISc_KIF9_like"/>
    <property type="match status" value="1"/>
</dbReference>
<dbReference type="FunFam" id="3.40.850.10:FF:000040">
    <property type="entry name" value="Kinesin-like protein"/>
    <property type="match status" value="1"/>
</dbReference>
<dbReference type="Gene3D" id="3.40.850.10">
    <property type="entry name" value="Kinesin motor domain"/>
    <property type="match status" value="1"/>
</dbReference>
<dbReference type="InterPro" id="IPR056524">
    <property type="entry name" value="KIF6/9_C"/>
</dbReference>
<dbReference type="InterPro" id="IPR027640">
    <property type="entry name" value="Kinesin-like_fam"/>
</dbReference>
<dbReference type="InterPro" id="IPR019821">
    <property type="entry name" value="Kinesin_motor_CS"/>
</dbReference>
<dbReference type="InterPro" id="IPR001752">
    <property type="entry name" value="Kinesin_motor_dom"/>
</dbReference>
<dbReference type="InterPro" id="IPR036961">
    <property type="entry name" value="Kinesin_motor_dom_sf"/>
</dbReference>
<dbReference type="InterPro" id="IPR027417">
    <property type="entry name" value="P-loop_NTPase"/>
</dbReference>
<dbReference type="PANTHER" id="PTHR47968">
    <property type="entry name" value="CENTROMERE PROTEIN E"/>
    <property type="match status" value="1"/>
</dbReference>
<dbReference type="PANTHER" id="PTHR47968:SF62">
    <property type="entry name" value="KINESIN FAMILY MEMBER 5A"/>
    <property type="match status" value="1"/>
</dbReference>
<dbReference type="Pfam" id="PF23735">
    <property type="entry name" value="KIF9"/>
    <property type="match status" value="1"/>
</dbReference>
<dbReference type="Pfam" id="PF00225">
    <property type="entry name" value="Kinesin"/>
    <property type="match status" value="1"/>
</dbReference>
<dbReference type="PRINTS" id="PR00380">
    <property type="entry name" value="KINESINHEAVY"/>
</dbReference>
<dbReference type="SMART" id="SM00129">
    <property type="entry name" value="KISc"/>
    <property type="match status" value="1"/>
</dbReference>
<dbReference type="SUPFAM" id="SSF52540">
    <property type="entry name" value="P-loop containing nucleoside triphosphate hydrolases"/>
    <property type="match status" value="1"/>
</dbReference>
<dbReference type="PROSITE" id="PS00411">
    <property type="entry name" value="KINESIN_MOTOR_1"/>
    <property type="match status" value="1"/>
</dbReference>
<dbReference type="PROSITE" id="PS50067">
    <property type="entry name" value="KINESIN_MOTOR_2"/>
    <property type="match status" value="1"/>
</dbReference>
<feature type="chain" id="PRO_0000125443" description="Kinesin-like protein KIF9">
    <location>
        <begin position="1"/>
        <end position="790"/>
    </location>
</feature>
<feature type="domain" description="Kinesin motor" evidence="3">
    <location>
        <begin position="6"/>
        <end position="340"/>
    </location>
</feature>
<feature type="region of interest" description="Disordered" evidence="4">
    <location>
        <begin position="482"/>
        <end position="521"/>
    </location>
</feature>
<feature type="region of interest" description="Disordered" evidence="4">
    <location>
        <begin position="547"/>
        <end position="577"/>
    </location>
</feature>
<feature type="coiled-coil region" evidence="2">
    <location>
        <begin position="342"/>
        <end position="442"/>
    </location>
</feature>
<feature type="coiled-coil region" evidence="2">
    <location>
        <begin position="600"/>
        <end position="695"/>
    </location>
</feature>
<feature type="binding site" evidence="3">
    <location>
        <begin position="12"/>
        <end position="14"/>
    </location>
    <ligand>
        <name>ATP</name>
        <dbReference type="ChEBI" id="CHEBI:30616"/>
    </ligand>
</feature>
<feature type="binding site" evidence="3">
    <location>
        <begin position="93"/>
        <end position="100"/>
    </location>
    <ligand>
        <name>ATP</name>
        <dbReference type="ChEBI" id="CHEBI:30616"/>
    </ligand>
</feature>
<feature type="modified residue" description="Phosphothreonine" evidence="1">
    <location>
        <position position="530"/>
    </location>
</feature>
<feature type="sequence conflict" description="In Ref. 3; BAA22397." evidence="6" ref="3">
    <original>DLAGSERLS</original>
    <variation>KLIDTVDLE</variation>
    <location>
        <begin position="245"/>
        <end position="253"/>
    </location>
</feature>
<feature type="sequence conflict" description="In Ref. 1; CAB46016." evidence="6" ref="1">
    <original>A</original>
    <variation>D</variation>
    <location>
        <position position="334"/>
    </location>
</feature>
<accession>Q9WV04</accession>
<accession>E9QMT7</accession>
<accession>O35070</accession>
<gene>
    <name type="primary">Kif9</name>
</gene>
<reference key="1">
    <citation type="submission" date="1999-03" db="EMBL/GenBank/DDBJ databases">
        <authorList>
            <person name="Piddini E."/>
            <person name="Hellias B."/>
            <person name="Dotti C.G."/>
        </authorList>
    </citation>
    <scope>NUCLEOTIDE SEQUENCE [MRNA]</scope>
    <source>
        <strain>B6 X SJ</strain>
        <tissue>Hippocampus</tissue>
    </source>
</reference>
<reference key="2">
    <citation type="journal article" date="2009" name="PLoS Biol.">
        <title>Lineage-specific biology revealed by a finished genome assembly of the mouse.</title>
        <authorList>
            <person name="Church D.M."/>
            <person name="Goodstadt L."/>
            <person name="Hillier L.W."/>
            <person name="Zody M.C."/>
            <person name="Goldstein S."/>
            <person name="She X."/>
            <person name="Bult C.J."/>
            <person name="Agarwala R."/>
            <person name="Cherry J.L."/>
            <person name="DiCuccio M."/>
            <person name="Hlavina W."/>
            <person name="Kapustin Y."/>
            <person name="Meric P."/>
            <person name="Maglott D."/>
            <person name="Birtle Z."/>
            <person name="Marques A.C."/>
            <person name="Graves T."/>
            <person name="Zhou S."/>
            <person name="Teague B."/>
            <person name="Potamousis K."/>
            <person name="Churas C."/>
            <person name="Place M."/>
            <person name="Herschleb J."/>
            <person name="Runnheim R."/>
            <person name="Forrest D."/>
            <person name="Amos-Landgraf J."/>
            <person name="Schwartz D.C."/>
            <person name="Cheng Z."/>
            <person name="Lindblad-Toh K."/>
            <person name="Eichler E.E."/>
            <person name="Ponting C.P."/>
        </authorList>
    </citation>
    <scope>NUCLEOTIDE SEQUENCE [LARGE SCALE GENOMIC DNA]</scope>
    <source>
        <strain>C57BL/6J</strain>
    </source>
</reference>
<reference key="3">
    <citation type="journal article" date="1997" name="Proc. Natl. Acad. Sci. U.S.A.">
        <title>Identification and classification of 16 new kinesin superfamily (KIF) proteins in mouse genome.</title>
        <authorList>
            <person name="Nakagawa T."/>
            <person name="Tanaka Y."/>
            <person name="Matsuoka E."/>
            <person name="Kondo S."/>
            <person name="Okada Y."/>
            <person name="Noda Y."/>
            <person name="Kanai Y."/>
            <person name="Hirokawa N."/>
        </authorList>
    </citation>
    <scope>NUCLEOTIDE SEQUENCE [MRNA] OF 114-253</scope>
    <source>
        <strain>ICR</strain>
    </source>
</reference>
<reference key="4">
    <citation type="journal article" date="2010" name="Cell">
        <title>A tissue-specific atlas of mouse protein phosphorylation and expression.</title>
        <authorList>
            <person name="Huttlin E.L."/>
            <person name="Jedrychowski M.P."/>
            <person name="Elias J.E."/>
            <person name="Goswami T."/>
            <person name="Rad R."/>
            <person name="Beausoleil S.A."/>
            <person name="Villen J."/>
            <person name="Haas W."/>
            <person name="Sowa M.E."/>
            <person name="Gygi S.P."/>
        </authorList>
    </citation>
    <scope>IDENTIFICATION BY MASS SPECTROMETRY [LARGE SCALE ANALYSIS]</scope>
    <source>
        <tissue>Testis</tissue>
    </source>
</reference>
<reference key="5">
    <citation type="journal article" date="2020" name="FASEB J.">
        <title>Testis-enriched kinesin KIF9 is important for progressive motility in mouse spermatozoa.</title>
        <authorList>
            <person name="Miyata H."/>
            <person name="Shimada K."/>
            <person name="Morohoshi A."/>
            <person name="Oura S."/>
            <person name="Matsumura T."/>
            <person name="Xu Z."/>
            <person name="Oyama Y."/>
            <person name="Ikawa M."/>
        </authorList>
    </citation>
    <scope>FUNCTION</scope>
    <scope>SUBCELLULAR LOCATION</scope>
    <scope>DISRUPTION PHENOTYPE</scope>
    <scope>TISSUE SPECIFICITY</scope>
    <scope>INTERACTION WITH HYDIN</scope>
</reference>
<sequence length="790" mass="89898">MGTRKKVQAFVRVRPTDDFAHEMIKYGEDNKSIDIHLKKDTRRGVVNNQQTDWSFKLDGVLHNASQDLVYETVAKDAVSQALDGYNGTIMCYGQTGAGKTYTMTGATENYKHRGILPRALQQVFRMIEERPTHAITVRVSYLEIYNENLFDLLSTLPYVGPSVTPMTIVENPQGIFIKGLSVHLTSQEEDAFSLLFEGETNRIIASHTMNKNSSRSHCIFTIYMEAHSRTLSDEKYITSKINLVDLAGSERLSKTGSEGRVLKEATYINKSLSFLEQAIIALGDQNRDHVPFRQSKLTHALKDSLGGNCNMVLVTNIYGEAAQLDETLSSLRFASRMKLVTTEPAINEKYDAERMVKNLEKELALLKQELAIHDSLSNRTLVNYDPMDEIQIAEINSQVRRYLEGTLDEIDIINLRQIQEVFNQFRVVLSQQEQEVESALRRKYTLIDKNDFAAISAVQKVGLMDIEGNLVGEPDGQSFGLGVAPFSVKPGKKPKTKKTPKDQFSSSARKEGASSPVSGKDFDVASISKTQLIPSSKDGDLKDMLARERETSSIEPLISDSPKEELRAPRPSTPPSRTVAFEEFKNERGSEINRIFKENKSILNERKKRASETTQRINAIKQEIDETKDALNFQKSLREKQGEYENKGLMIIDEEEFLLILKLKDLKKQYRNEYQELRDLRAEIQYCQRLVDQCRHRLLMEFDIWYNESFMIPEDVQVALKLGSSIRPGMVPISRIVCLGEDDQDRFSHLQQTVLPEGLDSITFYNAKVKTDQKHNYMKTMVGLQQSHRK</sequence>
<protein>
    <recommendedName>
        <fullName>Kinesin-like protein KIF9</fullName>
    </recommendedName>
</protein>
<organism>
    <name type="scientific">Mus musculus</name>
    <name type="common">Mouse</name>
    <dbReference type="NCBI Taxonomy" id="10090"/>
    <lineage>
        <taxon>Eukaryota</taxon>
        <taxon>Metazoa</taxon>
        <taxon>Chordata</taxon>
        <taxon>Craniata</taxon>
        <taxon>Vertebrata</taxon>
        <taxon>Euteleostomi</taxon>
        <taxon>Mammalia</taxon>
        <taxon>Eutheria</taxon>
        <taxon>Euarchontoglires</taxon>
        <taxon>Glires</taxon>
        <taxon>Rodentia</taxon>
        <taxon>Myomorpha</taxon>
        <taxon>Muroidea</taxon>
        <taxon>Muridae</taxon>
        <taxon>Murinae</taxon>
        <taxon>Mus</taxon>
        <taxon>Mus</taxon>
    </lineage>
</organism>
<proteinExistence type="evidence at protein level"/>
<evidence type="ECO:0000250" key="1">
    <source>
        <dbReference type="UniProtKB" id="Q9HAQ2"/>
    </source>
</evidence>
<evidence type="ECO:0000255" key="2"/>
<evidence type="ECO:0000255" key="3">
    <source>
        <dbReference type="PROSITE-ProRule" id="PRU00283"/>
    </source>
</evidence>
<evidence type="ECO:0000256" key="4">
    <source>
        <dbReference type="SAM" id="MobiDB-lite"/>
    </source>
</evidence>
<evidence type="ECO:0000269" key="5">
    <source>
    </source>
</evidence>
<evidence type="ECO:0000305" key="6"/>
<evidence type="ECO:0000305" key="7">
    <source>
    </source>
</evidence>